<feature type="transit peptide" description="Mitochondrion" evidence="3">
    <location>
        <begin position="1"/>
        <end status="unknown"/>
    </location>
</feature>
<feature type="chain" id="PRO_0000001228" description="5-aminolevulinate synthase, erythroid-specific, mitochondrial">
    <location>
        <begin status="unknown"/>
        <end position="582"/>
    </location>
</feature>
<feature type="active site" evidence="1">
    <location>
        <position position="386"/>
    </location>
</feature>
<feature type="binding site" evidence="1">
    <location>
        <position position="158"/>
    </location>
    <ligand>
        <name>succinyl-CoA</name>
        <dbReference type="ChEBI" id="CHEBI:57292"/>
    </ligand>
</feature>
<feature type="binding site" description="in other chain" evidence="2">
    <location>
        <position position="253"/>
    </location>
    <ligand>
        <name>pyridoxal 5'-phosphate</name>
        <dbReference type="ChEBI" id="CHEBI:597326"/>
        <note>ligand shared between dimeric partners</note>
    </ligand>
</feature>
<feature type="binding site" description="in other chain" evidence="2">
    <location>
        <position position="254"/>
    </location>
    <ligand>
        <name>pyridoxal 5'-phosphate</name>
        <dbReference type="ChEBI" id="CHEBI:597326"/>
        <note>ligand shared between dimeric partners</note>
    </ligand>
</feature>
<feature type="binding site" evidence="1">
    <location>
        <position position="275"/>
    </location>
    <ligand>
        <name>succinyl-CoA</name>
        <dbReference type="ChEBI" id="CHEBI:57292"/>
    </ligand>
</feature>
<feature type="binding site" evidence="1">
    <location>
        <position position="294"/>
    </location>
    <ligand>
        <name>succinyl-CoA</name>
        <dbReference type="ChEBI" id="CHEBI:57292"/>
    </ligand>
</feature>
<feature type="binding site" description="in other chain" evidence="1">
    <location>
        <position position="327"/>
    </location>
    <ligand>
        <name>pyridoxal 5'-phosphate</name>
        <dbReference type="ChEBI" id="CHEBI:597326"/>
        <note>ligand shared between dimeric partners</note>
    </ligand>
</feature>
<feature type="binding site" description="in other chain" evidence="2">
    <location>
        <position position="355"/>
    </location>
    <ligand>
        <name>pyridoxal 5'-phosphate</name>
        <dbReference type="ChEBI" id="CHEBI:597326"/>
        <note>ligand shared between dimeric partners</note>
    </ligand>
</feature>
<feature type="binding site" description="in other chain" evidence="2">
    <location>
        <position position="383"/>
    </location>
    <ligand>
        <name>pyridoxal 5'-phosphate</name>
        <dbReference type="ChEBI" id="CHEBI:597326"/>
        <note>ligand shared between dimeric partners</note>
    </ligand>
</feature>
<feature type="binding site" evidence="2">
    <location>
        <position position="415"/>
    </location>
    <ligand>
        <name>pyridoxal 5'-phosphate</name>
        <dbReference type="ChEBI" id="CHEBI:597326"/>
        <note>ligand shared between dimeric partners</note>
    </ligand>
</feature>
<feature type="binding site" evidence="2">
    <location>
        <position position="416"/>
    </location>
    <ligand>
        <name>pyridoxal 5'-phosphate</name>
        <dbReference type="ChEBI" id="CHEBI:597326"/>
        <note>ligand shared between dimeric partners</note>
    </ligand>
</feature>
<feature type="binding site" evidence="1">
    <location>
        <position position="503"/>
    </location>
    <ligand>
        <name>succinyl-CoA</name>
        <dbReference type="ChEBI" id="CHEBI:57292"/>
    </ligand>
</feature>
<feature type="modified residue" description="N6-(pyridoxal phosphate)lysine" evidence="2">
    <location>
        <position position="386"/>
    </location>
</feature>
<keyword id="KW-0012">Acyltransferase</keyword>
<keyword id="KW-0350">Heme biosynthesis</keyword>
<keyword id="KW-0472">Membrane</keyword>
<keyword id="KW-0496">Mitochondrion</keyword>
<keyword id="KW-0999">Mitochondrion inner membrane</keyword>
<keyword id="KW-0663">Pyridoxal phosphate</keyword>
<keyword id="KW-0808">Transferase</keyword>
<keyword id="KW-0809">Transit peptide</keyword>
<accession>P43090</accession>
<organism>
    <name type="scientific">Opsanus tau</name>
    <name type="common">Oyster toadfish</name>
    <name type="synonym">Gadus tau</name>
    <dbReference type="NCBI Taxonomy" id="8068"/>
    <lineage>
        <taxon>Eukaryota</taxon>
        <taxon>Metazoa</taxon>
        <taxon>Chordata</taxon>
        <taxon>Craniata</taxon>
        <taxon>Vertebrata</taxon>
        <taxon>Euteleostomi</taxon>
        <taxon>Actinopterygii</taxon>
        <taxon>Neopterygii</taxon>
        <taxon>Teleostei</taxon>
        <taxon>Neoteleostei</taxon>
        <taxon>Acanthomorphata</taxon>
        <taxon>Batrachoidaria</taxon>
        <taxon>Batrachoididae</taxon>
        <taxon>Opsanus</taxon>
    </lineage>
</organism>
<gene>
    <name type="primary">alas2</name>
</gene>
<proteinExistence type="evidence at transcript level"/>
<evidence type="ECO:0000250" key="1">
    <source>
        <dbReference type="UniProtKB" id="P18079"/>
    </source>
</evidence>
<evidence type="ECO:0000250" key="2">
    <source>
        <dbReference type="UniProtKB" id="P22557"/>
    </source>
</evidence>
<evidence type="ECO:0000255" key="3"/>
<evidence type="ECO:0000305" key="4"/>
<protein>
    <recommendedName>
        <fullName>5-aminolevulinate synthase, erythroid-specific, mitochondrial</fullName>
        <shortName>ALAS-E</shortName>
        <ecNumber evidence="2">2.3.1.37</ecNumber>
    </recommendedName>
    <alternativeName>
        <fullName>5-aminolevulinic acid synthase 2</fullName>
    </alternativeName>
    <alternativeName>
        <fullName>Delta-ALA synthase 2</fullName>
    </alternativeName>
    <alternativeName>
        <fullName>Delta-aminolevulinate synthase 2</fullName>
    </alternativeName>
</protein>
<sequence>MAAFLHHCPFLKSMPKPALRRRVPALLSLADRCPVIVHQVCISRLHILETKLDVSPTQPKRQRLSLLDQKRLFAQTATQVAVSVSKGCPFVSSQIGMVRASPEVQEDVQADLKSPVLPTPPQTGITQLLKDNMVGPSFDYDNFFNEKIAEKKRDHTYRVFKTVNRNAVVFPFAEDYSVSDRQGSQVSVWCSNDYLGMSRHPRVLEAIREVLERHGAGAGGTRNISGTSKYHVTLEKELAHLHQKDAALVFSSCFVANDSTLFTLAKMLPGCHIYSDAGNHASMIQGIRNSGAKRFIFRHNDSRHLEELLQQSDPKTPKIVAFETVHSMDGAICPLEELCDVAHRHGALTFVDEVHAVGLYGAHGAGVGERDNVMHKIDIVSGTLGKAFGCVGGYVASSAALVDTVRSFAAGFIFTTSLPPMILAGALESVRVLKSPEGQLLRRAHQRNVKYMRQLLMDKGLPVVNCPSHIIPIRVGNAELNTKVCDSLLEKHNIYVQAINYPTVPRGQELLRLAPSPHHHPAMMEYFVDKLVEVWQEAGLLLNGPATVSCTFCDRPLHFDLMSEWEKSYFGNMEPQYITMSA</sequence>
<comment type="function">
    <text evidence="2">Catalyzes the pyridoxal 5'-phosphate (PLP)-dependent condensation of succinyl-CoA and glycine to form aminolevulinic acid (ALA), with CoA and CO2 as by-products (By similarity). Contributes significantly to heme formation during erythropoiesis (By similarity).</text>
</comment>
<comment type="catalytic activity">
    <reaction evidence="2">
        <text>succinyl-CoA + glycine + H(+) = 5-aminolevulinate + CO2 + CoA</text>
        <dbReference type="Rhea" id="RHEA:12921"/>
        <dbReference type="ChEBI" id="CHEBI:15378"/>
        <dbReference type="ChEBI" id="CHEBI:16526"/>
        <dbReference type="ChEBI" id="CHEBI:57287"/>
        <dbReference type="ChEBI" id="CHEBI:57292"/>
        <dbReference type="ChEBI" id="CHEBI:57305"/>
        <dbReference type="ChEBI" id="CHEBI:356416"/>
        <dbReference type="EC" id="2.3.1.37"/>
    </reaction>
    <physiologicalReaction direction="left-to-right" evidence="2">
        <dbReference type="Rhea" id="RHEA:12922"/>
    </physiologicalReaction>
</comment>
<comment type="cofactor">
    <cofactor evidence="2">
        <name>pyridoxal 5'-phosphate</name>
        <dbReference type="ChEBI" id="CHEBI:597326"/>
    </cofactor>
</comment>
<comment type="pathway">
    <text evidence="2">Porphyrin-containing compound metabolism; protoporphyrin-IX biosynthesis; 5-aminolevulinate from glycine: step 1/1.</text>
</comment>
<comment type="subunit">
    <text evidence="2">Homodimer.</text>
</comment>
<comment type="subcellular location">
    <subcellularLocation>
        <location evidence="2">Mitochondrion inner membrane</location>
        <topology evidence="2">Peripheral membrane protein</topology>
    </subcellularLocation>
    <text evidence="2">Localizes to the matrix side of the mitochondrion inner membrane.</text>
</comment>
<comment type="domain">
    <text evidence="2">C-terminus is a mobile self-inhibitory loop which interferes directly with active site.</text>
</comment>
<comment type="similarity">
    <text evidence="4">Belongs to the class-II pyridoxal-phosphate-dependent aminotransferase family.</text>
</comment>
<name>HEM0_OPSTA</name>
<dbReference type="EC" id="2.3.1.37" evidence="2"/>
<dbReference type="EMBL" id="L02632">
    <property type="protein sequence ID" value="AAA60729.1"/>
    <property type="molecule type" value="mRNA"/>
</dbReference>
<dbReference type="SMR" id="P43090"/>
<dbReference type="UniPathway" id="UPA00251">
    <property type="reaction ID" value="UER00375"/>
</dbReference>
<dbReference type="GO" id="GO:0005743">
    <property type="term" value="C:mitochondrial inner membrane"/>
    <property type="evidence" value="ECO:0000250"/>
    <property type="project" value="UniProtKB"/>
</dbReference>
<dbReference type="GO" id="GO:0005759">
    <property type="term" value="C:mitochondrial matrix"/>
    <property type="evidence" value="ECO:0007669"/>
    <property type="project" value="InterPro"/>
</dbReference>
<dbReference type="GO" id="GO:0003870">
    <property type="term" value="F:5-aminolevulinate synthase activity"/>
    <property type="evidence" value="ECO:0000250"/>
    <property type="project" value="UniProtKB"/>
</dbReference>
<dbReference type="GO" id="GO:0030170">
    <property type="term" value="F:pyridoxal phosphate binding"/>
    <property type="evidence" value="ECO:0007669"/>
    <property type="project" value="InterPro"/>
</dbReference>
<dbReference type="GO" id="GO:0048821">
    <property type="term" value="P:erythrocyte development"/>
    <property type="evidence" value="ECO:0007669"/>
    <property type="project" value="TreeGrafter"/>
</dbReference>
<dbReference type="GO" id="GO:0042541">
    <property type="term" value="P:hemoglobin biosynthetic process"/>
    <property type="evidence" value="ECO:0007669"/>
    <property type="project" value="TreeGrafter"/>
</dbReference>
<dbReference type="GO" id="GO:0006782">
    <property type="term" value="P:protoporphyrinogen IX biosynthetic process"/>
    <property type="evidence" value="ECO:0007669"/>
    <property type="project" value="UniProtKB-UniPathway"/>
</dbReference>
<dbReference type="GO" id="GO:0001666">
    <property type="term" value="P:response to hypoxia"/>
    <property type="evidence" value="ECO:0000250"/>
    <property type="project" value="UniProtKB"/>
</dbReference>
<dbReference type="CDD" id="cd06454">
    <property type="entry name" value="KBL_like"/>
    <property type="match status" value="1"/>
</dbReference>
<dbReference type="FunFam" id="3.90.1150.10:FF:000045">
    <property type="entry name" value="5-aminolevulinate synthase"/>
    <property type="match status" value="1"/>
</dbReference>
<dbReference type="FunFam" id="3.40.640.10:FF:000006">
    <property type="entry name" value="5-aminolevulinate synthase, mitochondrial"/>
    <property type="match status" value="1"/>
</dbReference>
<dbReference type="Gene3D" id="3.90.1150.10">
    <property type="entry name" value="Aspartate Aminotransferase, domain 1"/>
    <property type="match status" value="1"/>
</dbReference>
<dbReference type="Gene3D" id="3.40.640.10">
    <property type="entry name" value="Type I PLP-dependent aspartate aminotransferase-like (Major domain)"/>
    <property type="match status" value="1"/>
</dbReference>
<dbReference type="InterPro" id="IPR010961">
    <property type="entry name" value="4pyrrol_synth_NH2levulA_synth"/>
</dbReference>
<dbReference type="InterPro" id="IPR015118">
    <property type="entry name" value="5aminolev_synth_preseq"/>
</dbReference>
<dbReference type="InterPro" id="IPR001917">
    <property type="entry name" value="Aminotrans_II_pyridoxalP_BS"/>
</dbReference>
<dbReference type="InterPro" id="IPR004839">
    <property type="entry name" value="Aminotransferase_I/II_large"/>
</dbReference>
<dbReference type="InterPro" id="IPR050087">
    <property type="entry name" value="AON_synthase_class-II"/>
</dbReference>
<dbReference type="InterPro" id="IPR015424">
    <property type="entry name" value="PyrdxlP-dep_Trfase"/>
</dbReference>
<dbReference type="InterPro" id="IPR015421">
    <property type="entry name" value="PyrdxlP-dep_Trfase_major"/>
</dbReference>
<dbReference type="InterPro" id="IPR015422">
    <property type="entry name" value="PyrdxlP-dep_Trfase_small"/>
</dbReference>
<dbReference type="NCBIfam" id="TIGR01821">
    <property type="entry name" value="5aminolev_synth"/>
    <property type="match status" value="1"/>
</dbReference>
<dbReference type="PANTHER" id="PTHR13693:SF58">
    <property type="entry name" value="5-AMINOLEVULINATE SYNTHASE, ERYTHROID-SPECIFIC, MITOCHONDRIAL"/>
    <property type="match status" value="1"/>
</dbReference>
<dbReference type="PANTHER" id="PTHR13693">
    <property type="entry name" value="CLASS II AMINOTRANSFERASE/8-AMINO-7-OXONONANOATE SYNTHASE"/>
    <property type="match status" value="1"/>
</dbReference>
<dbReference type="Pfam" id="PF00155">
    <property type="entry name" value="Aminotran_1_2"/>
    <property type="match status" value="1"/>
</dbReference>
<dbReference type="Pfam" id="PF09029">
    <property type="entry name" value="Preseq_ALAS"/>
    <property type="match status" value="1"/>
</dbReference>
<dbReference type="SUPFAM" id="SSF53383">
    <property type="entry name" value="PLP-dependent transferases"/>
    <property type="match status" value="1"/>
</dbReference>
<dbReference type="PROSITE" id="PS00599">
    <property type="entry name" value="AA_TRANSFER_CLASS_2"/>
    <property type="match status" value="1"/>
</dbReference>
<reference key="1">
    <citation type="submission" date="1992-11" db="EMBL/GenBank/DDBJ databases">
        <title>5-aminolevulinate synthase in the marine fish, Opsanus tau.</title>
        <authorList>
            <person name="Hellmich H.L."/>
            <person name="Cornell N.W."/>
        </authorList>
    </citation>
    <scope>NUCLEOTIDE SEQUENCE [MRNA]</scope>
</reference>